<sequence length="145" mass="16022">MILWRISAYADLSGTGGLRVSGRWHQAGRPVVYAATSPPGAMLEVLVHLEIDPEDFPTTMRLLRIELPDTVSQAQLPALQPGWSAQPELTRTLGNRFLDDCSALLLPVPSAIMPSTTNYLFNPRHPQAQSAKIQVEDFTPDSRLF</sequence>
<keyword id="KW-0002">3D-structure</keyword>
<keyword id="KW-0520">NAD</keyword>
<keyword id="KW-0548">Nucleotidyltransferase</keyword>
<keyword id="KW-1185">Reference proteome</keyword>
<keyword id="KW-1277">Toxin-antitoxin system</keyword>
<keyword id="KW-0808">Transferase</keyword>
<gene>
    <name evidence="4" type="primary">res</name>
    <name type="ordered locus">PP_2434</name>
</gene>
<dbReference type="EC" id="2.4.2.-" evidence="1"/>
<dbReference type="EMBL" id="AE015451">
    <property type="protein sequence ID" value="AAN68046.1"/>
    <property type="molecule type" value="Genomic_DNA"/>
</dbReference>
<dbReference type="RefSeq" id="NP_744582.1">
    <property type="nucleotide sequence ID" value="NC_002947.4"/>
</dbReference>
<dbReference type="RefSeq" id="WP_003250527.1">
    <property type="nucleotide sequence ID" value="NZ_CP169744.1"/>
</dbReference>
<dbReference type="PDB" id="6GW6">
    <property type="method" value="X-ray"/>
    <property type="resolution" value="2.21 A"/>
    <property type="chains" value="A/D=1-145"/>
</dbReference>
<dbReference type="PDBsum" id="6GW6"/>
<dbReference type="SMR" id="Q88K57"/>
<dbReference type="STRING" id="160488.PP_2434"/>
<dbReference type="PaxDb" id="160488-PP_2434"/>
<dbReference type="KEGG" id="ppu:PP_2434"/>
<dbReference type="PATRIC" id="fig|160488.4.peg.2579"/>
<dbReference type="eggNOG" id="COG5654">
    <property type="taxonomic scope" value="Bacteria"/>
</dbReference>
<dbReference type="HOGENOM" id="CLU_133611_0_1_6"/>
<dbReference type="OrthoDB" id="9789501at2"/>
<dbReference type="PhylomeDB" id="Q88K57"/>
<dbReference type="BioCyc" id="PPUT160488:G1G01-2599-MONOMER"/>
<dbReference type="Proteomes" id="UP000000556">
    <property type="component" value="Chromosome"/>
</dbReference>
<dbReference type="GO" id="GO:0016779">
    <property type="term" value="F:nucleotidyltransferase activity"/>
    <property type="evidence" value="ECO:0007669"/>
    <property type="project" value="UniProtKB-KW"/>
</dbReference>
<dbReference type="InterPro" id="IPR014914">
    <property type="entry name" value="RES_dom"/>
</dbReference>
<dbReference type="Pfam" id="PF08808">
    <property type="entry name" value="RES"/>
    <property type="match status" value="1"/>
</dbReference>
<dbReference type="SMART" id="SM00953">
    <property type="entry name" value="RES"/>
    <property type="match status" value="1"/>
</dbReference>
<organism>
    <name type="scientific">Pseudomonas putida (strain ATCC 47054 / DSM 6125 / CFBP 8728 / NCIMB 11950 / KT2440)</name>
    <dbReference type="NCBI Taxonomy" id="160488"/>
    <lineage>
        <taxon>Bacteria</taxon>
        <taxon>Pseudomonadati</taxon>
        <taxon>Pseudomonadota</taxon>
        <taxon>Gammaproteobacteria</taxon>
        <taxon>Pseudomonadales</taxon>
        <taxon>Pseudomonadaceae</taxon>
        <taxon>Pseudomonas</taxon>
    </lineage>
</organism>
<comment type="function">
    <text evidence="2 3">Toxic component of a type II toxin-antitoxin (TA) system. Expression in E.coli inhibits cell growth. In vivo it is probably neutralized by cognate antitoxin Xre; this has not been shown upon expression in E.coli (PubMed:30315706). Probably depletes intracellular NAD(+) (By similarity).</text>
</comment>
<comment type="subunit">
    <text evidence="3">Homodimer. Forms a complex with cognate antitoxin Xre; the 2 toxin molecules dimerize and each contacts an Xre homodimer. Most Res-Xre contacts are between the antitoxin molecule closest to the toxin.</text>
</comment>
<comment type="similarity">
    <text evidence="5">Belongs to the MbcT/ParT/Res family.</text>
</comment>
<accession>Q88K57</accession>
<evidence type="ECO:0000250" key="1">
    <source>
        <dbReference type="UniProtKB" id="P9WLP9"/>
    </source>
</evidence>
<evidence type="ECO:0000250" key="2">
    <source>
        <dbReference type="UniProtKB" id="Q7N4H9"/>
    </source>
</evidence>
<evidence type="ECO:0000269" key="3">
    <source>
    </source>
</evidence>
<evidence type="ECO:0000303" key="4">
    <source>
    </source>
</evidence>
<evidence type="ECO:0000305" key="5"/>
<evidence type="ECO:0007744" key="6">
    <source>
        <dbReference type="PDB" id="6GW6"/>
    </source>
</evidence>
<evidence type="ECO:0007829" key="7">
    <source>
        <dbReference type="PDB" id="6GW6"/>
    </source>
</evidence>
<reference key="1">
    <citation type="journal article" date="2002" name="Environ. Microbiol.">
        <title>Complete genome sequence and comparative analysis of the metabolically versatile Pseudomonas putida KT2440.</title>
        <authorList>
            <person name="Nelson K.E."/>
            <person name="Weinel C."/>
            <person name="Paulsen I.T."/>
            <person name="Dodson R.J."/>
            <person name="Hilbert H."/>
            <person name="Martins dos Santos V.A.P."/>
            <person name="Fouts D.E."/>
            <person name="Gill S.R."/>
            <person name="Pop M."/>
            <person name="Holmes M."/>
            <person name="Brinkac L.M."/>
            <person name="Beanan M.J."/>
            <person name="DeBoy R.T."/>
            <person name="Daugherty S.C."/>
            <person name="Kolonay J.F."/>
            <person name="Madupu R."/>
            <person name="Nelson W.C."/>
            <person name="White O."/>
            <person name="Peterson J.D."/>
            <person name="Khouri H.M."/>
            <person name="Hance I."/>
            <person name="Chris Lee P."/>
            <person name="Holtzapple E.K."/>
            <person name="Scanlan D."/>
            <person name="Tran K."/>
            <person name="Moazzez A."/>
            <person name="Utterback T.R."/>
            <person name="Rizzo M."/>
            <person name="Lee K."/>
            <person name="Kosack D."/>
            <person name="Moestl D."/>
            <person name="Wedler H."/>
            <person name="Lauber J."/>
            <person name="Stjepandic D."/>
            <person name="Hoheisel J."/>
            <person name="Straetz M."/>
            <person name="Heim S."/>
            <person name="Kiewitz C."/>
            <person name="Eisen J.A."/>
            <person name="Timmis K.N."/>
            <person name="Duesterhoeft A."/>
            <person name="Tuemmler B."/>
            <person name="Fraser C.M."/>
        </authorList>
    </citation>
    <scope>NUCLEOTIDE SEQUENCE [LARGE SCALE GENOMIC DNA]</scope>
    <source>
        <strain>ATCC 47054 / DSM 6125 / CFBP 8728 / NCIMB 11950 / KT2440</strain>
    </source>
</reference>
<reference evidence="6" key="2">
    <citation type="journal article" date="2019" name="Mol. Microbiol.">
        <title>The RES domain toxins of RES-Xre toxin-antitoxin modules induce cell stasis by degrading NAD+.</title>
        <authorList>
            <person name="Skjerning R.B."/>
            <person name="Senissar M."/>
            <person name="Winther K.S."/>
            <person name="Gerdes K."/>
            <person name="Brodersen D.E."/>
        </authorList>
    </citation>
    <scope>X-RAY CRYSTALLOGRAPHY (2.21 ANGSTROMS) IN COMPLEX WITH ANTITOXIN</scope>
    <scope>FUNCTION AS A TOXIN</scope>
    <scope>EXPRESSION IN E.COLI</scope>
    <scope>SUBUNIT</scope>
    <source>
        <strain>ATCC 47054 / DSM 6125 / CFBP 8728 / NCIMB 11950 / KT2440</strain>
    </source>
</reference>
<proteinExistence type="evidence at protein level"/>
<feature type="chain" id="PRO_0000448607" description="Toxin Res">
    <location>
        <begin position="1"/>
        <end position="145"/>
    </location>
</feature>
<feature type="strand" evidence="7">
    <location>
        <begin position="2"/>
        <end position="8"/>
    </location>
</feature>
<feature type="strand" evidence="7">
    <location>
        <begin position="10"/>
        <end position="12"/>
    </location>
</feature>
<feature type="helix" evidence="7">
    <location>
        <begin position="15"/>
        <end position="18"/>
    </location>
</feature>
<feature type="strand" evidence="7">
    <location>
        <begin position="27"/>
        <end position="29"/>
    </location>
</feature>
<feature type="strand" evidence="7">
    <location>
        <begin position="32"/>
        <end position="37"/>
    </location>
</feature>
<feature type="helix" evidence="7">
    <location>
        <begin position="38"/>
        <end position="48"/>
    </location>
</feature>
<feature type="helix" evidence="7">
    <location>
        <begin position="53"/>
        <end position="55"/>
    </location>
</feature>
<feature type="strand" evidence="7">
    <location>
        <begin position="61"/>
        <end position="66"/>
    </location>
</feature>
<feature type="helix" evidence="7">
    <location>
        <begin position="83"/>
        <end position="85"/>
    </location>
</feature>
<feature type="helix" evidence="7">
    <location>
        <begin position="87"/>
        <end position="100"/>
    </location>
</feature>
<feature type="strand" evidence="7">
    <location>
        <begin position="104"/>
        <end position="109"/>
    </location>
</feature>
<feature type="strand" evidence="7">
    <location>
        <begin position="111"/>
        <end position="113"/>
    </location>
</feature>
<feature type="strand" evidence="7">
    <location>
        <begin position="117"/>
        <end position="121"/>
    </location>
</feature>
<feature type="helix" evidence="7">
    <location>
        <begin position="126"/>
        <end position="130"/>
    </location>
</feature>
<feature type="strand" evidence="7">
    <location>
        <begin position="132"/>
        <end position="136"/>
    </location>
</feature>
<name>RES_PSEPK</name>
<protein>
    <recommendedName>
        <fullName evidence="4">Toxin Res</fullName>
        <ecNumber evidence="1">2.4.2.-</ecNumber>
    </recommendedName>
</protein>